<dbReference type="EC" id="2.3.1.89" evidence="1"/>
<dbReference type="EMBL" id="AE015929">
    <property type="protein sequence ID" value="AAO04674.1"/>
    <property type="molecule type" value="Genomic_DNA"/>
</dbReference>
<dbReference type="RefSeq" id="NP_764632.1">
    <property type="nucleotide sequence ID" value="NC_004461.1"/>
</dbReference>
<dbReference type="RefSeq" id="WP_002485048.1">
    <property type="nucleotide sequence ID" value="NC_004461.1"/>
</dbReference>
<dbReference type="SMR" id="Q8CSM7"/>
<dbReference type="KEGG" id="sep:SE_1077"/>
<dbReference type="PATRIC" id="fig|176280.10.peg.1053"/>
<dbReference type="eggNOG" id="COG2171">
    <property type="taxonomic scope" value="Bacteria"/>
</dbReference>
<dbReference type="HOGENOM" id="CLU_103751_0_0_9"/>
<dbReference type="OrthoDB" id="9788080at2"/>
<dbReference type="UniPathway" id="UPA00034">
    <property type="reaction ID" value="UER00022"/>
</dbReference>
<dbReference type="Proteomes" id="UP000001411">
    <property type="component" value="Chromosome"/>
</dbReference>
<dbReference type="GO" id="GO:0047200">
    <property type="term" value="F:tetrahydrodipicolinate N-acetyltransferase activity"/>
    <property type="evidence" value="ECO:0007669"/>
    <property type="project" value="UniProtKB-EC"/>
</dbReference>
<dbReference type="GO" id="GO:0019877">
    <property type="term" value="P:diaminopimelate biosynthetic process"/>
    <property type="evidence" value="ECO:0007669"/>
    <property type="project" value="UniProtKB-UniRule"/>
</dbReference>
<dbReference type="GO" id="GO:0009089">
    <property type="term" value="P:lysine biosynthetic process via diaminopimelate"/>
    <property type="evidence" value="ECO:0007669"/>
    <property type="project" value="UniProtKB-UniRule"/>
</dbReference>
<dbReference type="CDD" id="cd03350">
    <property type="entry name" value="LbH_THP_succinylT"/>
    <property type="match status" value="1"/>
</dbReference>
<dbReference type="Gene3D" id="2.160.10.10">
    <property type="entry name" value="Hexapeptide repeat proteins"/>
    <property type="match status" value="1"/>
</dbReference>
<dbReference type="Gene3D" id="3.30.70.250">
    <property type="entry name" value="Malonyl-CoA ACP transacylase, ACP-binding"/>
    <property type="match status" value="1"/>
</dbReference>
<dbReference type="HAMAP" id="MF_01691">
    <property type="entry name" value="DapH"/>
    <property type="match status" value="1"/>
</dbReference>
<dbReference type="InterPro" id="IPR019873">
    <property type="entry name" value="DapH"/>
</dbReference>
<dbReference type="InterPro" id="IPR013710">
    <property type="entry name" value="DapH_N"/>
</dbReference>
<dbReference type="InterPro" id="IPR001451">
    <property type="entry name" value="Hexapep"/>
</dbReference>
<dbReference type="InterPro" id="IPR018357">
    <property type="entry name" value="Hexapep_transf_CS"/>
</dbReference>
<dbReference type="InterPro" id="IPR050179">
    <property type="entry name" value="Trans_hexapeptide_repeat"/>
</dbReference>
<dbReference type="InterPro" id="IPR011004">
    <property type="entry name" value="Trimer_LpxA-like_sf"/>
</dbReference>
<dbReference type="NCBIfam" id="TIGR03532">
    <property type="entry name" value="DapD_Ac"/>
    <property type="match status" value="1"/>
</dbReference>
<dbReference type="PANTHER" id="PTHR43300:SF10">
    <property type="entry name" value="2,3,4,5-TETRAHYDROPYRIDINE-2,6-DICARBOXYLATE N-ACETYLTRANSFERASE"/>
    <property type="match status" value="1"/>
</dbReference>
<dbReference type="PANTHER" id="PTHR43300">
    <property type="entry name" value="ACETYLTRANSFERASE"/>
    <property type="match status" value="1"/>
</dbReference>
<dbReference type="Pfam" id="PF08503">
    <property type="entry name" value="DapH_N"/>
    <property type="match status" value="1"/>
</dbReference>
<dbReference type="Pfam" id="PF14602">
    <property type="entry name" value="Hexapep_2"/>
    <property type="match status" value="1"/>
</dbReference>
<dbReference type="SUPFAM" id="SSF51161">
    <property type="entry name" value="Trimeric LpxA-like enzymes"/>
    <property type="match status" value="1"/>
</dbReference>
<dbReference type="PROSITE" id="PS00101">
    <property type="entry name" value="HEXAPEP_TRANSFERASES"/>
    <property type="match status" value="1"/>
</dbReference>
<reference key="1">
    <citation type="journal article" date="2003" name="Mol. Microbiol.">
        <title>Genome-based analysis of virulence genes in a non-biofilm-forming Staphylococcus epidermidis strain (ATCC 12228).</title>
        <authorList>
            <person name="Zhang Y.-Q."/>
            <person name="Ren S.-X."/>
            <person name="Li H.-L."/>
            <person name="Wang Y.-X."/>
            <person name="Fu G."/>
            <person name="Yang J."/>
            <person name="Qin Z.-Q."/>
            <person name="Miao Y.-G."/>
            <person name="Wang W.-Y."/>
            <person name="Chen R.-S."/>
            <person name="Shen Y."/>
            <person name="Chen Z."/>
            <person name="Yuan Z.-H."/>
            <person name="Zhao G.-P."/>
            <person name="Qu D."/>
            <person name="Danchin A."/>
            <person name="Wen Y.-M."/>
        </authorList>
    </citation>
    <scope>NUCLEOTIDE SEQUENCE [LARGE SCALE GENOMIC DNA]</scope>
    <source>
        <strain>ATCC 12228 / FDA PCI 1200</strain>
    </source>
</reference>
<organism>
    <name type="scientific">Staphylococcus epidermidis (strain ATCC 12228 / FDA PCI 1200)</name>
    <dbReference type="NCBI Taxonomy" id="176280"/>
    <lineage>
        <taxon>Bacteria</taxon>
        <taxon>Bacillati</taxon>
        <taxon>Bacillota</taxon>
        <taxon>Bacilli</taxon>
        <taxon>Bacillales</taxon>
        <taxon>Staphylococcaceae</taxon>
        <taxon>Staphylococcus</taxon>
    </lineage>
</organism>
<comment type="function">
    <text evidence="1">Catalyzes the transfer of an acetyl group from acetyl-CoA to tetrahydrodipicolinate.</text>
</comment>
<comment type="catalytic activity">
    <reaction evidence="1">
        <text>(S)-2,3,4,5-tetrahydrodipicolinate + acetyl-CoA + H2O = L-2-acetamido-6-oxoheptanedioate + CoA</text>
        <dbReference type="Rhea" id="RHEA:13085"/>
        <dbReference type="ChEBI" id="CHEBI:15377"/>
        <dbReference type="ChEBI" id="CHEBI:16845"/>
        <dbReference type="ChEBI" id="CHEBI:57287"/>
        <dbReference type="ChEBI" id="CHEBI:57288"/>
        <dbReference type="ChEBI" id="CHEBI:58117"/>
        <dbReference type="EC" id="2.3.1.89"/>
    </reaction>
</comment>
<comment type="pathway">
    <text evidence="1">Amino-acid biosynthesis; L-lysine biosynthesis via DAP pathway; LL-2,6-diaminopimelate from (S)-tetrahydrodipicolinate (acetylase route): step 1/3.</text>
</comment>
<comment type="similarity">
    <text evidence="1">Belongs to the transferase hexapeptide repeat family. DapH subfamily.</text>
</comment>
<keyword id="KW-0012">Acyltransferase</keyword>
<keyword id="KW-0028">Amino-acid biosynthesis</keyword>
<keyword id="KW-0220">Diaminopimelate biosynthesis</keyword>
<keyword id="KW-0457">Lysine biosynthesis</keyword>
<keyword id="KW-0677">Repeat</keyword>
<keyword id="KW-0808">Transferase</keyword>
<protein>
    <recommendedName>
        <fullName evidence="1">2,3,4,5-tetrahydropyridine-2,6-dicarboxylate N-acetyltransferase</fullName>
        <ecNumber evidence="1">2.3.1.89</ecNumber>
    </recommendedName>
    <alternativeName>
        <fullName evidence="1">Tetrahydrodipicolinate N-acetyltransferase</fullName>
        <shortName evidence="1">THP acetyltransferase</shortName>
        <shortName evidence="1">Tetrahydropicolinate acetylase</shortName>
    </alternativeName>
</protein>
<sequence length="240" mass="25486">MVQHLSAQEIIQYISDAKKSTPLKVYVNGHFENVTFPESFKVFGSEHSKVIFCEANEWKQFYQQNHSLITELEIEMDRRNSAIPLKDLTNTNARIEPGAFIREQAIIEDGAVVMMGATINIGAIVGEGTMIDMNATLGGRATTGKNVHVGAGAVLAGVIEPPSASPVVIEDNVLIGANAVILEGVRVGAGAIVAAGAIVTQDVPAGAVVAGTPAKVIKQTSEVQDSKREIVSALRKLNNE</sequence>
<feature type="chain" id="PRO_0000376702" description="2,3,4,5-tetrahydropyridine-2,6-dicarboxylate N-acetyltransferase">
    <location>
        <begin position="1"/>
        <end position="240"/>
    </location>
</feature>
<accession>Q8CSM7</accession>
<evidence type="ECO:0000255" key="1">
    <source>
        <dbReference type="HAMAP-Rule" id="MF_01691"/>
    </source>
</evidence>
<name>DAPH_STAES</name>
<proteinExistence type="inferred from homology"/>
<gene>
    <name evidence="1" type="primary">dapH</name>
    <name type="ordered locus">SE_1077</name>
</gene>